<gene>
    <name type="primary">Bcam</name>
    <name type="synonym">Lu</name>
</gene>
<feature type="signal peptide" evidence="2">
    <location>
        <begin position="1"/>
        <end position="25"/>
    </location>
</feature>
<feature type="chain" id="PRO_0000383339" description="Basal cell adhesion molecule">
    <location>
        <begin position="26"/>
        <end position="624"/>
    </location>
</feature>
<feature type="topological domain" description="Extracellular" evidence="2">
    <location>
        <begin position="26"/>
        <end position="543"/>
    </location>
</feature>
<feature type="transmembrane region" description="Helical" evidence="2">
    <location>
        <begin position="544"/>
        <end position="564"/>
    </location>
</feature>
<feature type="topological domain" description="Cytoplasmic" evidence="2">
    <location>
        <begin position="565"/>
        <end position="624"/>
    </location>
</feature>
<feature type="domain" description="Ig-like V-type 1">
    <location>
        <begin position="26"/>
        <end position="136"/>
    </location>
</feature>
<feature type="domain" description="Ig-like V-type 2">
    <location>
        <begin position="141"/>
        <end position="251"/>
    </location>
</feature>
<feature type="domain" description="Ig-like C2-type 1">
    <location>
        <begin position="268"/>
        <end position="343"/>
    </location>
</feature>
<feature type="domain" description="Ig-like C2-type 2">
    <location>
        <begin position="357"/>
        <end position="436"/>
    </location>
</feature>
<feature type="domain" description="Ig-like C2-type 3">
    <location>
        <begin position="443"/>
        <end position="534"/>
    </location>
</feature>
<feature type="region of interest" description="Disordered" evidence="4">
    <location>
        <begin position="477"/>
        <end position="497"/>
    </location>
</feature>
<feature type="region of interest" description="Disordered" evidence="4">
    <location>
        <begin position="574"/>
        <end position="624"/>
    </location>
</feature>
<feature type="compositionally biased region" description="Basic and acidic residues" evidence="4">
    <location>
        <begin position="587"/>
        <end position="601"/>
    </location>
</feature>
<feature type="compositionally biased region" description="Gly residues" evidence="4">
    <location>
        <begin position="605"/>
        <end position="624"/>
    </location>
</feature>
<feature type="modified residue" description="Phosphoserine" evidence="1">
    <location>
        <position position="592"/>
    </location>
</feature>
<feature type="modified residue" description="Phosphoserine" evidence="1">
    <location>
        <position position="594"/>
    </location>
</feature>
<feature type="modified residue" description="Phosphoserine" evidence="1">
    <location>
        <position position="596"/>
    </location>
</feature>
<feature type="glycosylation site" description="N-linked (GlcNAc...) asparagine" evidence="2">
    <location>
        <position position="315"/>
    </location>
</feature>
<feature type="glycosylation site" description="N-linked (GlcNAc...) asparagine" evidence="2">
    <location>
        <position position="371"/>
    </location>
</feature>
<feature type="glycosylation site" description="N-linked (GlcNAc...) asparagine" evidence="2">
    <location>
        <position position="378"/>
    </location>
</feature>
<feature type="disulfide bond" evidence="3">
    <location>
        <begin position="47"/>
        <end position="119"/>
    </location>
</feature>
<feature type="disulfide bond" evidence="3">
    <location>
        <begin position="166"/>
        <end position="231"/>
    </location>
</feature>
<feature type="disulfide bond" evidence="3">
    <location>
        <begin position="285"/>
        <end position="331"/>
    </location>
</feature>
<feature type="disulfide bond" evidence="3">
    <location>
        <begin position="379"/>
        <end position="419"/>
    </location>
</feature>
<feature type="disulfide bond" evidence="3">
    <location>
        <begin position="468"/>
        <end position="518"/>
    </location>
</feature>
<proteinExistence type="evidence at transcript level"/>
<sequence length="624" mass="67512">MEPPDARAGLLWLTLLLSGYSGAQAELHVSVPPRVEVMRGEQIALDCTPREHPENYVLEWLLVDASGARHRLASVEPQGSEFLGTIHNSRGRRPPYKIDSLGRLVIAEAQVGDERDYVCVVKAGAAGTSEATSSVRVFATPEATEVAPNKGTLSVMEQFAQEIATCSSNNGNPVPRITWYQNGQRLDVPMELNSKGYMTSRTVREASGLYSLTSTLYLRLHKEDRDASFHCAAHYDLPSGQHGRLDSHTFRLTLHYPTEHVEFWVGSPSTTEGWVREGDAVQLLCQGDGSPSPEYSFFREQGNQEEQLNVNLKGNLTLEGVHRSQSGIYGCRVEDYDADEEVQLVKKLKLHVAYLDPLELSVPEEFSVFLNSSGTVVNCSARGLPAPIVRWTKDSVTVADGPILSLDSVTFDSAGTYTCEASTPTVPLLSRTQSFQLVVQGAPELKPNEIKPKSGTSWTEGDEVMLTCSARGFPEPKLTWSQRGDTTPAEPPFEGRGWMSSSLTLKVTSALSREGVSCEASNIHGKNGHVFHFGSVAPQTAQAGVAVMAVAVSVGLLLLVVAAFYCMRRKGRPGCCQRAEKGAPPAREPELSHSGSERPEHTGLLMGGPSGGGRGGNGGFGDEC</sequence>
<name>BCAM_RAT</name>
<dbReference type="EMBL" id="AB035510">
    <property type="protein sequence ID" value="BAB16052.1"/>
    <property type="molecule type" value="mRNA"/>
</dbReference>
<dbReference type="EMBL" id="CH473979">
    <property type="protein sequence ID" value="EDM08138.1"/>
    <property type="molecule type" value="Genomic_DNA"/>
</dbReference>
<dbReference type="EMBL" id="BC072479">
    <property type="protein sequence ID" value="AAH72479.1"/>
    <property type="molecule type" value="mRNA"/>
</dbReference>
<dbReference type="RefSeq" id="NP_113940.1">
    <property type="nucleotide sequence ID" value="NM_031752.2"/>
</dbReference>
<dbReference type="SMR" id="Q9ESS6"/>
<dbReference type="BioGRID" id="249366">
    <property type="interactions" value="1"/>
</dbReference>
<dbReference type="FunCoup" id="Q9ESS6">
    <property type="interactions" value="321"/>
</dbReference>
<dbReference type="IntAct" id="Q9ESS6">
    <property type="interactions" value="1"/>
</dbReference>
<dbReference type="MINT" id="Q9ESS6"/>
<dbReference type="STRING" id="10116.ENSRNOP00000047809"/>
<dbReference type="GlyCosmos" id="Q9ESS6">
    <property type="glycosylation" value="3 sites, No reported glycans"/>
</dbReference>
<dbReference type="GlyGen" id="Q9ESS6">
    <property type="glycosylation" value="3 sites"/>
</dbReference>
<dbReference type="iPTMnet" id="Q9ESS6"/>
<dbReference type="PhosphoSitePlus" id="Q9ESS6"/>
<dbReference type="SwissPalm" id="Q9ESS6"/>
<dbReference type="jPOST" id="Q9ESS6"/>
<dbReference type="PaxDb" id="10116-ENSRNOP00000047809"/>
<dbReference type="Ensembl" id="ENSRNOT00000045574.5">
    <property type="protein sequence ID" value="ENSRNOP00000047809.3"/>
    <property type="gene ID" value="ENSRNOG00000029399.5"/>
</dbReference>
<dbReference type="GeneID" id="78958"/>
<dbReference type="KEGG" id="rno:78958"/>
<dbReference type="UCSC" id="RGD:68378">
    <property type="organism name" value="rat"/>
</dbReference>
<dbReference type="AGR" id="RGD:68378"/>
<dbReference type="CTD" id="4059"/>
<dbReference type="RGD" id="68378">
    <property type="gene designation" value="Bcam"/>
</dbReference>
<dbReference type="eggNOG" id="ENOG502QWC8">
    <property type="taxonomic scope" value="Eukaryota"/>
</dbReference>
<dbReference type="GeneTree" id="ENSGT00940000161038"/>
<dbReference type="HOGENOM" id="CLU_028888_1_0_1"/>
<dbReference type="InParanoid" id="Q9ESS6"/>
<dbReference type="OrthoDB" id="77519at9989"/>
<dbReference type="PhylomeDB" id="Q9ESS6"/>
<dbReference type="TreeFam" id="TF330534"/>
<dbReference type="PRO" id="PR:Q9ESS6"/>
<dbReference type="Proteomes" id="UP000002494">
    <property type="component" value="Chromosome 1"/>
</dbReference>
<dbReference type="Proteomes" id="UP000234681">
    <property type="component" value="Chromosome 1"/>
</dbReference>
<dbReference type="Bgee" id="ENSRNOG00000029399">
    <property type="expression patterns" value="Expressed in lung and 19 other cell types or tissues"/>
</dbReference>
<dbReference type="GO" id="GO:0009986">
    <property type="term" value="C:cell surface"/>
    <property type="evidence" value="ECO:0000266"/>
    <property type="project" value="RGD"/>
</dbReference>
<dbReference type="GO" id="GO:0005886">
    <property type="term" value="C:plasma membrane"/>
    <property type="evidence" value="ECO:0000266"/>
    <property type="project" value="RGD"/>
</dbReference>
<dbReference type="GO" id="GO:0043236">
    <property type="term" value="F:laminin binding"/>
    <property type="evidence" value="ECO:0000266"/>
    <property type="project" value="RGD"/>
</dbReference>
<dbReference type="GO" id="GO:0005055">
    <property type="term" value="F:laminin receptor activity"/>
    <property type="evidence" value="ECO:0000266"/>
    <property type="project" value="RGD"/>
</dbReference>
<dbReference type="GO" id="GO:0001525">
    <property type="term" value="P:angiogenesis"/>
    <property type="evidence" value="ECO:0000318"/>
    <property type="project" value="GO_Central"/>
</dbReference>
<dbReference type="GO" id="GO:0007155">
    <property type="term" value="P:cell adhesion"/>
    <property type="evidence" value="ECO:0000266"/>
    <property type="project" value="RGD"/>
</dbReference>
<dbReference type="GO" id="GO:0007160">
    <property type="term" value="P:cell-matrix adhesion"/>
    <property type="evidence" value="ECO:0000266"/>
    <property type="project" value="RGD"/>
</dbReference>
<dbReference type="CDD" id="cd00096">
    <property type="entry name" value="Ig"/>
    <property type="match status" value="2"/>
</dbReference>
<dbReference type="FunFam" id="2.60.40.10:FF:001535">
    <property type="entry name" value="Basal cell adhesion molecule"/>
    <property type="match status" value="1"/>
</dbReference>
<dbReference type="Gene3D" id="2.60.40.10">
    <property type="entry name" value="Immunoglobulins"/>
    <property type="match status" value="5"/>
</dbReference>
<dbReference type="InterPro" id="IPR013162">
    <property type="entry name" value="CD80_C2-set"/>
</dbReference>
<dbReference type="InterPro" id="IPR007110">
    <property type="entry name" value="Ig-like_dom"/>
</dbReference>
<dbReference type="InterPro" id="IPR036179">
    <property type="entry name" value="Ig-like_dom_sf"/>
</dbReference>
<dbReference type="InterPro" id="IPR013783">
    <property type="entry name" value="Ig-like_fold"/>
</dbReference>
<dbReference type="InterPro" id="IPR003599">
    <property type="entry name" value="Ig_sub"/>
</dbReference>
<dbReference type="InterPro" id="IPR003598">
    <property type="entry name" value="Ig_sub2"/>
</dbReference>
<dbReference type="InterPro" id="IPR051116">
    <property type="entry name" value="Surface_Rcpt/Adhesion_Mol"/>
</dbReference>
<dbReference type="PANTHER" id="PTHR11973:SF17">
    <property type="entry name" value="BASAL CELL ADHESION MOLECULE"/>
    <property type="match status" value="1"/>
</dbReference>
<dbReference type="PANTHER" id="PTHR11973">
    <property type="entry name" value="CELL SURFACE GLYCOPROTEIN MUC18-RELATED"/>
    <property type="match status" value="1"/>
</dbReference>
<dbReference type="Pfam" id="PF08205">
    <property type="entry name" value="C2-set_2"/>
    <property type="match status" value="1"/>
</dbReference>
<dbReference type="Pfam" id="PF13895">
    <property type="entry name" value="Ig_2"/>
    <property type="match status" value="1"/>
</dbReference>
<dbReference type="Pfam" id="PF13927">
    <property type="entry name" value="Ig_3"/>
    <property type="match status" value="2"/>
</dbReference>
<dbReference type="SMART" id="SM00409">
    <property type="entry name" value="IG"/>
    <property type="match status" value="5"/>
</dbReference>
<dbReference type="SMART" id="SM00408">
    <property type="entry name" value="IGc2"/>
    <property type="match status" value="3"/>
</dbReference>
<dbReference type="SUPFAM" id="SSF48726">
    <property type="entry name" value="Immunoglobulin"/>
    <property type="match status" value="5"/>
</dbReference>
<dbReference type="PROSITE" id="PS50835">
    <property type="entry name" value="IG_LIKE"/>
    <property type="match status" value="5"/>
</dbReference>
<protein>
    <recommendedName>
        <fullName>Basal cell adhesion molecule</fullName>
    </recommendedName>
    <alternativeName>
        <fullName>B-CAM cell surface glycoprotein</fullName>
    </alternativeName>
    <alternativeName>
        <fullName>Lutheran antigen</fullName>
    </alternativeName>
    <cdAntigenName>CD239</cdAntigenName>
</protein>
<reference key="1">
    <citation type="submission" date="1999-12" db="EMBL/GenBank/DDBJ databases">
        <title>Rat Lutheran antigen.</title>
        <authorList>
            <person name="Taira E."/>
            <person name="Okumura S."/>
            <person name="Miki N."/>
        </authorList>
    </citation>
    <scope>NUCLEOTIDE SEQUENCE [MRNA]</scope>
    <source>
        <strain>Sprague-Dawley</strain>
        <tissue>Heart</tissue>
    </source>
</reference>
<reference key="2">
    <citation type="submission" date="2005-09" db="EMBL/GenBank/DDBJ databases">
        <authorList>
            <person name="Mural R.J."/>
            <person name="Adams M.D."/>
            <person name="Myers E.W."/>
            <person name="Smith H.O."/>
            <person name="Venter J.C."/>
        </authorList>
    </citation>
    <scope>NUCLEOTIDE SEQUENCE [LARGE SCALE GENOMIC DNA]</scope>
</reference>
<reference key="3">
    <citation type="journal article" date="2004" name="Genome Res.">
        <title>The status, quality, and expansion of the NIH full-length cDNA project: the Mammalian Gene Collection (MGC).</title>
        <authorList>
            <consortium name="The MGC Project Team"/>
        </authorList>
    </citation>
    <scope>NUCLEOTIDE SEQUENCE [LARGE SCALE MRNA]</scope>
    <source>
        <tissue>Heart</tissue>
    </source>
</reference>
<accession>Q9ESS6</accession>
<evidence type="ECO:0000250" key="1">
    <source>
        <dbReference type="UniProtKB" id="P50895"/>
    </source>
</evidence>
<evidence type="ECO:0000255" key="2"/>
<evidence type="ECO:0000255" key="3">
    <source>
        <dbReference type="PROSITE-ProRule" id="PRU00114"/>
    </source>
</evidence>
<evidence type="ECO:0000256" key="4">
    <source>
        <dbReference type="SAM" id="MobiDB-lite"/>
    </source>
</evidence>
<keyword id="KW-0130">Cell adhesion</keyword>
<keyword id="KW-1003">Cell membrane</keyword>
<keyword id="KW-1015">Disulfide bond</keyword>
<keyword id="KW-0325">Glycoprotein</keyword>
<keyword id="KW-0393">Immunoglobulin domain</keyword>
<keyword id="KW-0472">Membrane</keyword>
<keyword id="KW-0597">Phosphoprotein</keyword>
<keyword id="KW-0675">Receptor</keyword>
<keyword id="KW-1185">Reference proteome</keyword>
<keyword id="KW-0677">Repeat</keyword>
<keyword id="KW-0732">Signal</keyword>
<keyword id="KW-0812">Transmembrane</keyword>
<keyword id="KW-1133">Transmembrane helix</keyword>
<organism>
    <name type="scientific">Rattus norvegicus</name>
    <name type="common">Rat</name>
    <dbReference type="NCBI Taxonomy" id="10116"/>
    <lineage>
        <taxon>Eukaryota</taxon>
        <taxon>Metazoa</taxon>
        <taxon>Chordata</taxon>
        <taxon>Craniata</taxon>
        <taxon>Vertebrata</taxon>
        <taxon>Euteleostomi</taxon>
        <taxon>Mammalia</taxon>
        <taxon>Eutheria</taxon>
        <taxon>Euarchontoglires</taxon>
        <taxon>Glires</taxon>
        <taxon>Rodentia</taxon>
        <taxon>Myomorpha</taxon>
        <taxon>Muroidea</taxon>
        <taxon>Muridae</taxon>
        <taxon>Murinae</taxon>
        <taxon>Rattus</taxon>
    </lineage>
</organism>
<comment type="function">
    <text evidence="1">Transmembrane glycoprotein that functions as both a receptor and an adhesion molecule playing a crucial role in cell adhesion, motility, migration and invasion. Extracellular domain enables binding to extracellular matrix proteins, such as laminin, integrin and other ligands while its intracellular domain interacts with cytoskeletal proteins like hemoglobin, facilitating cell signal transduction. Serves as a receptor for laminin alpha-5/LAMA5 to promote cell adhesion. Mechanistically, JAK2 induces BCAM phosphorylation and activates its adhesion to laminin by stimulating a Rap1/AKT signaling pathway in the absence of EPOR.</text>
</comment>
<comment type="subunit">
    <text evidence="1">Homodimer. Interacts with ITGA4:ITGB1. Interacts with spectrins SPTA1 and SPTB1.</text>
</comment>
<comment type="subcellular location">
    <subcellularLocation>
        <location evidence="1">Cell membrane</location>
        <topology evidence="1">Single-pass type I membrane protein</topology>
    </subcellularLocation>
</comment>